<dbReference type="EMBL" id="U17243">
    <property type="protein sequence ID" value="AAB67342.1"/>
    <property type="molecule type" value="Genomic_DNA"/>
</dbReference>
<dbReference type="EMBL" id="AY558216">
    <property type="protein sequence ID" value="AAS56542.1"/>
    <property type="molecule type" value="Genomic_DNA"/>
</dbReference>
<dbReference type="EMBL" id="BK006945">
    <property type="protein sequence ID" value="DAA09607.1"/>
    <property type="molecule type" value="Genomic_DNA"/>
</dbReference>
<dbReference type="PIR" id="S50381">
    <property type="entry name" value="S50381"/>
</dbReference>
<dbReference type="RefSeq" id="NP_013400.1">
    <property type="nucleotide sequence ID" value="NM_001182185.1"/>
</dbReference>
<dbReference type="SMR" id="Q05899"/>
<dbReference type="BioGRID" id="31561">
    <property type="interactions" value="63"/>
</dbReference>
<dbReference type="DIP" id="DIP-4684N"/>
<dbReference type="FunCoup" id="Q05899">
    <property type="interactions" value="113"/>
</dbReference>
<dbReference type="IntAct" id="Q05899">
    <property type="interactions" value="3"/>
</dbReference>
<dbReference type="MINT" id="Q05899"/>
<dbReference type="STRING" id="4932.YLR297W"/>
<dbReference type="iPTMnet" id="Q05899"/>
<dbReference type="PaxDb" id="4932-YLR297W"/>
<dbReference type="PeptideAtlas" id="Q05899"/>
<dbReference type="EnsemblFungi" id="YLR297W_mRNA">
    <property type="protein sequence ID" value="YLR297W"/>
    <property type="gene ID" value="YLR297W"/>
</dbReference>
<dbReference type="GeneID" id="851004"/>
<dbReference type="KEGG" id="sce:YLR297W"/>
<dbReference type="AGR" id="SGD:S000004288"/>
<dbReference type="SGD" id="S000004288">
    <property type="gene designation" value="YLR297W"/>
</dbReference>
<dbReference type="VEuPathDB" id="FungiDB:YLR297W"/>
<dbReference type="HOGENOM" id="CLU_1950497_0_0_1"/>
<dbReference type="InParanoid" id="Q05899"/>
<dbReference type="OMA" id="MCGDHHS"/>
<dbReference type="OrthoDB" id="4063430at2759"/>
<dbReference type="BioCyc" id="YEAST:G3O-32390-MONOMER"/>
<dbReference type="BioGRID-ORCS" id="851004">
    <property type="hits" value="0 hits in 10 CRISPR screens"/>
</dbReference>
<dbReference type="ChiTaRS" id="YLR297W">
    <property type="organism name" value="yeast"/>
</dbReference>
<dbReference type="PRO" id="PR:Q05899"/>
<dbReference type="Proteomes" id="UP000002311">
    <property type="component" value="Chromosome XII"/>
</dbReference>
<dbReference type="RNAct" id="Q05899">
    <property type="molecule type" value="protein"/>
</dbReference>
<dbReference type="GO" id="GO:0005737">
    <property type="term" value="C:cytoplasm"/>
    <property type="evidence" value="ECO:0007005"/>
    <property type="project" value="SGD"/>
</dbReference>
<dbReference type="GO" id="GO:0000324">
    <property type="term" value="C:fungal-type vacuole"/>
    <property type="evidence" value="ECO:0007005"/>
    <property type="project" value="SGD"/>
</dbReference>
<dbReference type="GO" id="GO:0000329">
    <property type="term" value="C:fungal-type vacuole membrane"/>
    <property type="evidence" value="ECO:0007005"/>
    <property type="project" value="SGD"/>
</dbReference>
<dbReference type="GO" id="GO:0005634">
    <property type="term" value="C:nucleus"/>
    <property type="evidence" value="ECO:0007005"/>
    <property type="project" value="SGD"/>
</dbReference>
<sequence>MVEGDFVDEQSNIALLSSKSMCGDHHSVKNSIGDEIFKLLTKILNSDEKASGDVHTLVSGTPDLSNFNLDNEPLENILAVFIISFIIVVVGVLLLGLIGMIFISLRSGSSNDKKLQSNDEEKQALAEKA</sequence>
<comment type="subcellular location">
    <subcellularLocation>
        <location evidence="5">Vacuole membrane</location>
        <topology evidence="5">Single-pass membrane protein</topology>
    </subcellularLocation>
</comment>
<comment type="induction">
    <text evidence="4">By the genotoxic agents methyl methanesulfonate (MMS), bleomycin and cisplatin.</text>
</comment>
<comment type="miscellaneous">
    <text evidence="3">Present with 922 molecules/cell in log phase SD medium.</text>
</comment>
<reference key="1">
    <citation type="journal article" date="1997" name="Nature">
        <title>The nucleotide sequence of Saccharomyces cerevisiae chromosome XII.</title>
        <authorList>
            <person name="Johnston M."/>
            <person name="Hillier L.W."/>
            <person name="Riles L."/>
            <person name="Albermann K."/>
            <person name="Andre B."/>
            <person name="Ansorge W."/>
            <person name="Benes V."/>
            <person name="Brueckner M."/>
            <person name="Delius H."/>
            <person name="Dubois E."/>
            <person name="Duesterhoeft A."/>
            <person name="Entian K.-D."/>
            <person name="Floeth M."/>
            <person name="Goffeau A."/>
            <person name="Hebling U."/>
            <person name="Heumann K."/>
            <person name="Heuss-Neitzel D."/>
            <person name="Hilbert H."/>
            <person name="Hilger F."/>
            <person name="Kleine K."/>
            <person name="Koetter P."/>
            <person name="Louis E.J."/>
            <person name="Messenguy F."/>
            <person name="Mewes H.-W."/>
            <person name="Miosga T."/>
            <person name="Moestl D."/>
            <person name="Mueller-Auer S."/>
            <person name="Nentwich U."/>
            <person name="Obermaier B."/>
            <person name="Piravandi E."/>
            <person name="Pohl T.M."/>
            <person name="Portetelle D."/>
            <person name="Purnelle B."/>
            <person name="Rechmann S."/>
            <person name="Rieger M."/>
            <person name="Rinke M."/>
            <person name="Rose M."/>
            <person name="Scharfe M."/>
            <person name="Scherens B."/>
            <person name="Scholler P."/>
            <person name="Schwager C."/>
            <person name="Schwarz S."/>
            <person name="Underwood A.P."/>
            <person name="Urrestarazu L.A."/>
            <person name="Vandenbol M."/>
            <person name="Verhasselt P."/>
            <person name="Vierendeels F."/>
            <person name="Voet M."/>
            <person name="Volckaert G."/>
            <person name="Voss H."/>
            <person name="Wambutt R."/>
            <person name="Wedler E."/>
            <person name="Wedler H."/>
            <person name="Zimmermann F.K."/>
            <person name="Zollner A."/>
            <person name="Hani J."/>
            <person name="Hoheisel J.D."/>
        </authorList>
    </citation>
    <scope>NUCLEOTIDE SEQUENCE [LARGE SCALE GENOMIC DNA]</scope>
    <source>
        <strain>ATCC 204508 / S288c</strain>
    </source>
</reference>
<reference key="2">
    <citation type="journal article" date="2014" name="G3 (Bethesda)">
        <title>The reference genome sequence of Saccharomyces cerevisiae: Then and now.</title>
        <authorList>
            <person name="Engel S.R."/>
            <person name="Dietrich F.S."/>
            <person name="Fisk D.G."/>
            <person name="Binkley G."/>
            <person name="Balakrishnan R."/>
            <person name="Costanzo M.C."/>
            <person name="Dwight S.S."/>
            <person name="Hitz B.C."/>
            <person name="Karra K."/>
            <person name="Nash R.S."/>
            <person name="Weng S."/>
            <person name="Wong E.D."/>
            <person name="Lloyd P."/>
            <person name="Skrzypek M.S."/>
            <person name="Miyasato S.R."/>
            <person name="Simison M."/>
            <person name="Cherry J.M."/>
        </authorList>
    </citation>
    <scope>GENOME REANNOTATION</scope>
    <source>
        <strain>ATCC 204508 / S288c</strain>
    </source>
</reference>
<reference key="3">
    <citation type="journal article" date="2007" name="Genome Res.">
        <title>Approaching a complete repository of sequence-verified protein-encoding clones for Saccharomyces cerevisiae.</title>
        <authorList>
            <person name="Hu Y."/>
            <person name="Rolfs A."/>
            <person name="Bhullar B."/>
            <person name="Murthy T.V.S."/>
            <person name="Zhu C."/>
            <person name="Berger M.F."/>
            <person name="Camargo A.A."/>
            <person name="Kelley F."/>
            <person name="McCarron S."/>
            <person name="Jepson D."/>
            <person name="Richardson A."/>
            <person name="Raphael J."/>
            <person name="Moreira D."/>
            <person name="Taycher E."/>
            <person name="Zuo D."/>
            <person name="Mohr S."/>
            <person name="Kane M.F."/>
            <person name="Williamson J."/>
            <person name="Simpson A.J.G."/>
            <person name="Bulyk M.L."/>
            <person name="Harlow E."/>
            <person name="Marsischky G."/>
            <person name="Kolodner R.D."/>
            <person name="LaBaer J."/>
        </authorList>
    </citation>
    <scope>NUCLEOTIDE SEQUENCE [GENOMIC DNA]</scope>
    <source>
        <strain>ATCC 204508 / S288c</strain>
    </source>
</reference>
<reference key="4">
    <citation type="journal article" date="2003" name="Nature">
        <title>Global analysis of protein localization in budding yeast.</title>
        <authorList>
            <person name="Huh W.-K."/>
            <person name="Falvo J.V."/>
            <person name="Gerke L.C."/>
            <person name="Carroll A.S."/>
            <person name="Howson R.W."/>
            <person name="Weissman J.S."/>
            <person name="O'Shea E.K."/>
        </authorList>
    </citation>
    <scope>SUBCELLULAR LOCATION [LARGE SCALE ANALYSIS]</scope>
</reference>
<reference key="5">
    <citation type="journal article" date="2003" name="Nature">
        <title>Global analysis of protein expression in yeast.</title>
        <authorList>
            <person name="Ghaemmaghami S."/>
            <person name="Huh W.-K."/>
            <person name="Bower K."/>
            <person name="Howson R.W."/>
            <person name="Belle A."/>
            <person name="Dephoure N."/>
            <person name="O'Shea E.K."/>
            <person name="Weissman J.S."/>
        </authorList>
    </citation>
    <scope>LEVEL OF PROTEIN EXPRESSION [LARGE SCALE ANALYSIS]</scope>
</reference>
<reference key="6">
    <citation type="journal article" date="2005" name="Mutat. Res.">
        <title>Differentiating mechanisms of toxicity using global gene expression analysis in Saccharomyces cerevisiae.</title>
        <authorList>
            <person name="Caba E."/>
            <person name="Dickinson D.A."/>
            <person name="Warnes G.R."/>
            <person name="Aubrecht J."/>
        </authorList>
    </citation>
    <scope>INDUCTION</scope>
</reference>
<organism>
    <name type="scientific">Saccharomyces cerevisiae (strain ATCC 204508 / S288c)</name>
    <name type="common">Baker's yeast</name>
    <dbReference type="NCBI Taxonomy" id="559292"/>
    <lineage>
        <taxon>Eukaryota</taxon>
        <taxon>Fungi</taxon>
        <taxon>Dikarya</taxon>
        <taxon>Ascomycota</taxon>
        <taxon>Saccharomycotina</taxon>
        <taxon>Saccharomycetes</taxon>
        <taxon>Saccharomycetales</taxon>
        <taxon>Saccharomycetaceae</taxon>
        <taxon>Saccharomyces</taxon>
    </lineage>
</organism>
<name>YL297_YEAST</name>
<accession>Q05899</accession>
<accession>D6VYU1</accession>
<feature type="chain" id="PRO_0000247161" description="Uncharacterized vacuolar protein YLR297W">
    <location>
        <begin position="1"/>
        <end position="129"/>
    </location>
</feature>
<feature type="transmembrane region" description="Helical" evidence="1">
    <location>
        <begin position="77"/>
        <end position="97"/>
    </location>
</feature>
<feature type="region of interest" description="Disordered" evidence="2">
    <location>
        <begin position="109"/>
        <end position="129"/>
    </location>
</feature>
<feature type="compositionally biased region" description="Basic and acidic residues" evidence="2">
    <location>
        <begin position="111"/>
        <end position="129"/>
    </location>
</feature>
<protein>
    <recommendedName>
        <fullName>Uncharacterized vacuolar protein YLR297W</fullName>
    </recommendedName>
</protein>
<gene>
    <name type="ordered locus">YLR297W</name>
</gene>
<proteinExistence type="evidence at protein level"/>
<evidence type="ECO:0000255" key="1"/>
<evidence type="ECO:0000256" key="2">
    <source>
        <dbReference type="SAM" id="MobiDB-lite"/>
    </source>
</evidence>
<evidence type="ECO:0000269" key="3">
    <source>
    </source>
</evidence>
<evidence type="ECO:0000269" key="4">
    <source>
    </source>
</evidence>
<evidence type="ECO:0000305" key="5"/>
<keyword id="KW-0472">Membrane</keyword>
<keyword id="KW-1185">Reference proteome</keyword>
<keyword id="KW-0812">Transmembrane</keyword>
<keyword id="KW-1133">Transmembrane helix</keyword>
<keyword id="KW-0926">Vacuole</keyword>